<proteinExistence type="inferred from homology"/>
<name>PAGP_YERPZ</name>
<evidence type="ECO:0000255" key="1">
    <source>
        <dbReference type="HAMAP-Rule" id="MF_00837"/>
    </source>
</evidence>
<protein>
    <recommendedName>
        <fullName evidence="1">Lipid A acyltransferase PagP</fullName>
        <ecNumber evidence="1">2.3.1.251</ecNumber>
    </recommendedName>
    <alternativeName>
        <fullName evidence="1">Lipid A acylation protein</fullName>
    </alternativeName>
</protein>
<gene>
    <name evidence="1" type="primary">pagP</name>
    <name type="ordered locus">YPZ3_1969</name>
</gene>
<dbReference type="EC" id="2.3.1.251" evidence="1"/>
<dbReference type="EMBL" id="CP001593">
    <property type="protein sequence ID" value="ADE64879.1"/>
    <property type="molecule type" value="Genomic_DNA"/>
</dbReference>
<dbReference type="RefSeq" id="WP_002221007.1">
    <property type="nucleotide sequence ID" value="NC_014029.1"/>
</dbReference>
<dbReference type="SMR" id="D5B7J8"/>
<dbReference type="GeneID" id="57976834"/>
<dbReference type="KEGG" id="ypz:YPZ3_1969"/>
<dbReference type="HOGENOM" id="CLU_104099_0_0_6"/>
<dbReference type="GO" id="GO:0009279">
    <property type="term" value="C:cell outer membrane"/>
    <property type="evidence" value="ECO:0007669"/>
    <property type="project" value="UniProtKB-SubCell"/>
</dbReference>
<dbReference type="GO" id="GO:0016746">
    <property type="term" value="F:acyltransferase activity"/>
    <property type="evidence" value="ECO:0007669"/>
    <property type="project" value="UniProtKB-UniRule"/>
</dbReference>
<dbReference type="GO" id="GO:0009245">
    <property type="term" value="P:lipid A biosynthetic process"/>
    <property type="evidence" value="ECO:0007669"/>
    <property type="project" value="UniProtKB-UniRule"/>
</dbReference>
<dbReference type="FunFam" id="2.40.160.20:FF:000002">
    <property type="entry name" value="Lipid A palmitoyltransferase PagP"/>
    <property type="match status" value="1"/>
</dbReference>
<dbReference type="Gene3D" id="2.40.160.20">
    <property type="match status" value="1"/>
</dbReference>
<dbReference type="HAMAP" id="MF_00837">
    <property type="entry name" value="PagP_transferase"/>
    <property type="match status" value="1"/>
</dbReference>
<dbReference type="InterPro" id="IPR009746">
    <property type="entry name" value="LipidA_acyl_PagP"/>
</dbReference>
<dbReference type="InterPro" id="IPR011250">
    <property type="entry name" value="OMP/PagP_b-brl"/>
</dbReference>
<dbReference type="NCBIfam" id="NF008271">
    <property type="entry name" value="PRK11045.1"/>
    <property type="match status" value="1"/>
</dbReference>
<dbReference type="Pfam" id="PF07017">
    <property type="entry name" value="PagP"/>
    <property type="match status" value="1"/>
</dbReference>
<dbReference type="SUPFAM" id="SSF56925">
    <property type="entry name" value="OMPA-like"/>
    <property type="match status" value="1"/>
</dbReference>
<feature type="signal peptide" evidence="1">
    <location>
        <begin position="1"/>
        <end position="25"/>
    </location>
</feature>
<feature type="chain" id="PRO_0000414481" description="Lipid A acyltransferase PagP">
    <location>
        <begin position="26"/>
        <end position="199"/>
    </location>
</feature>
<feature type="active site" evidence="1">
    <location>
        <position position="74"/>
    </location>
</feature>
<feature type="active site" evidence="1">
    <location>
        <position position="117"/>
    </location>
</feature>
<feature type="active site" evidence="1">
    <location>
        <position position="118"/>
    </location>
</feature>
<feature type="site" description="Role in lipopolysaccharide recognition" evidence="1">
    <location>
        <position position="83"/>
    </location>
</feature>
<feature type="site" description="Role in the phospholipid gating" evidence="1">
    <location>
        <position position="188"/>
    </location>
</feature>
<keyword id="KW-0012">Acyltransferase</keyword>
<keyword id="KW-0998">Cell outer membrane</keyword>
<keyword id="KW-0472">Membrane</keyword>
<keyword id="KW-0732">Signal</keyword>
<keyword id="KW-0808">Transferase</keyword>
<comment type="function">
    <text evidence="1">Transfers a fatty acid residue from the sn-1 position of a phospholipid to the N-linked hydroxyfatty acid chain on the proximal unit of lipid A or its precursors.</text>
</comment>
<comment type="catalytic activity">
    <reaction evidence="1">
        <text>a lipid A + a 1,2-diacyl-sn-glycero-3-phosphocholine = a hepta-acyl lipid A + a 2-acyl-sn-glycero-3-phosphocholine</text>
        <dbReference type="Rhea" id="RHEA:74275"/>
        <dbReference type="ChEBI" id="CHEBI:57643"/>
        <dbReference type="ChEBI" id="CHEBI:57875"/>
        <dbReference type="ChEBI" id="CHEBI:193141"/>
        <dbReference type="ChEBI" id="CHEBI:193142"/>
        <dbReference type="EC" id="2.3.1.251"/>
    </reaction>
</comment>
<comment type="catalytic activity">
    <reaction evidence="1">
        <text>a lipid IVA + a 1,2-diacyl-sn-glycero-3-phosphocholine = a lipid IVB + a 2-acyl-sn-glycero-3-phosphocholine</text>
        <dbReference type="Rhea" id="RHEA:74279"/>
        <dbReference type="ChEBI" id="CHEBI:57643"/>
        <dbReference type="ChEBI" id="CHEBI:57875"/>
        <dbReference type="ChEBI" id="CHEBI:176425"/>
        <dbReference type="ChEBI" id="CHEBI:193143"/>
        <dbReference type="EC" id="2.3.1.251"/>
    </reaction>
</comment>
<comment type="catalytic activity">
    <reaction evidence="1">
        <text>a lipid IIA + a 1,2-diacyl-sn-glycero-3-phosphocholine = a lipid IIB + a 2-acyl-sn-glycero-3-phosphocholine</text>
        <dbReference type="Rhea" id="RHEA:74283"/>
        <dbReference type="ChEBI" id="CHEBI:57643"/>
        <dbReference type="ChEBI" id="CHEBI:57875"/>
        <dbReference type="ChEBI" id="CHEBI:193144"/>
        <dbReference type="ChEBI" id="CHEBI:193145"/>
        <dbReference type="EC" id="2.3.1.251"/>
    </reaction>
</comment>
<comment type="subunit">
    <text evidence="1">Homodimer.</text>
</comment>
<comment type="subcellular location">
    <subcellularLocation>
        <location evidence="1">Cell outer membrane</location>
    </subcellularLocation>
</comment>
<comment type="similarity">
    <text evidence="1">Belongs to the lipid A palmitoyltransferase family.</text>
</comment>
<sequence>MNYKDIINACILSGVFLLHSPSALADTPSVGVSKGQESLQPAAEGNLWQRLIRNVSLAWNSPHQELYIPVNTWHNRWTYDDEKIASYNERPWGVGYGKYRYDEDNNWHSVYAMAFMDSHNRVEPILGYGYQKMWIPGEREGWRFGAGFTASITARYEYHYIPLPLPLPLISIEYNRLSLQTTYIPGTYNNGNVLFTWIR</sequence>
<reference key="1">
    <citation type="journal article" date="2010" name="J. Bacteriol.">
        <title>Complete genome sequences of Yersinia pestis from natural foci in China.</title>
        <authorList>
            <person name="Shen X."/>
            <person name="Wang Q."/>
            <person name="Xia L."/>
            <person name="Zhu X."/>
            <person name="Zhang Z."/>
            <person name="Liang Y."/>
            <person name="Cai H."/>
            <person name="Zhang E."/>
            <person name="Wei J."/>
            <person name="Chen C."/>
            <person name="Song Z."/>
            <person name="Zhang H."/>
            <person name="Yu D."/>
            <person name="Hai R."/>
        </authorList>
    </citation>
    <scope>NUCLEOTIDE SEQUENCE [LARGE SCALE GENOMIC DNA]</scope>
    <source>
        <strain>Z176003</strain>
    </source>
</reference>
<organism>
    <name type="scientific">Yersinia pestis (strain Z176003)</name>
    <dbReference type="NCBI Taxonomy" id="637386"/>
    <lineage>
        <taxon>Bacteria</taxon>
        <taxon>Pseudomonadati</taxon>
        <taxon>Pseudomonadota</taxon>
        <taxon>Gammaproteobacteria</taxon>
        <taxon>Enterobacterales</taxon>
        <taxon>Yersiniaceae</taxon>
        <taxon>Yersinia</taxon>
    </lineage>
</organism>
<accession>D5B7J8</accession>